<evidence type="ECO:0000255" key="1"/>
<evidence type="ECO:0000256" key="2">
    <source>
        <dbReference type="SAM" id="MobiDB-lite"/>
    </source>
</evidence>
<name>YOCL_BACSU</name>
<protein>
    <recommendedName>
        <fullName>Uncharacterized protein YocL</fullName>
    </recommendedName>
</protein>
<keyword id="KW-0175">Coiled coil</keyword>
<keyword id="KW-1185">Reference proteome</keyword>
<proteinExistence type="predicted"/>
<feature type="chain" id="PRO_0000049655" description="Uncharacterized protein YocL">
    <location>
        <begin position="1"/>
        <end position="110"/>
    </location>
</feature>
<feature type="region of interest" description="Disordered" evidence="2">
    <location>
        <begin position="85"/>
        <end position="110"/>
    </location>
</feature>
<feature type="coiled-coil region" evidence="1">
    <location>
        <begin position="16"/>
        <end position="46"/>
    </location>
</feature>
<feature type="compositionally biased region" description="Basic and acidic residues" evidence="2">
    <location>
        <begin position="85"/>
        <end position="96"/>
    </location>
</feature>
<gene>
    <name type="primary">yocL</name>
    <name type="ordered locus">BSU19250</name>
</gene>
<dbReference type="EMBL" id="AF027868">
    <property type="protein sequence ID" value="AAB84478.1"/>
    <property type="molecule type" value="Genomic_DNA"/>
</dbReference>
<dbReference type="EMBL" id="AL009126">
    <property type="protein sequence ID" value="CAB13817.1"/>
    <property type="molecule type" value="Genomic_DNA"/>
</dbReference>
<dbReference type="PIR" id="A69902">
    <property type="entry name" value="A69902"/>
</dbReference>
<dbReference type="RefSeq" id="NP_389806.1">
    <property type="nucleotide sequence ID" value="NC_000964.3"/>
</dbReference>
<dbReference type="RefSeq" id="WP_003231257.1">
    <property type="nucleotide sequence ID" value="NZ_OZ025638.1"/>
</dbReference>
<dbReference type="SMR" id="O34976"/>
<dbReference type="FunCoup" id="O34976">
    <property type="interactions" value="12"/>
</dbReference>
<dbReference type="STRING" id="224308.BSU19250"/>
<dbReference type="PaxDb" id="224308-BSU19250"/>
<dbReference type="EnsemblBacteria" id="CAB13817">
    <property type="protein sequence ID" value="CAB13817"/>
    <property type="gene ID" value="BSU_19250"/>
</dbReference>
<dbReference type="GeneID" id="939586"/>
<dbReference type="KEGG" id="bsu:BSU19250"/>
<dbReference type="PATRIC" id="fig|224308.179.peg.2105"/>
<dbReference type="eggNOG" id="ENOG5031XUX">
    <property type="taxonomic scope" value="Bacteria"/>
</dbReference>
<dbReference type="InParanoid" id="O34976"/>
<dbReference type="OrthoDB" id="2871491at2"/>
<dbReference type="BioCyc" id="BSUB:BSU19250-MONOMER"/>
<dbReference type="Proteomes" id="UP000001570">
    <property type="component" value="Chromosome"/>
</dbReference>
<reference key="1">
    <citation type="submission" date="1997-11" db="EMBL/GenBank/DDBJ databases">
        <title>Sequence analysis of the Bacillus subtilis chromosome region between the terC and odhAB loci cloned in a yeast artificial chromosome.</title>
        <authorList>
            <person name="Lapidus A."/>
            <person name="Galleron N."/>
            <person name="Sorokin A."/>
            <person name="Ehrlich S.D."/>
        </authorList>
    </citation>
    <scope>NUCLEOTIDE SEQUENCE [GENOMIC DNA]</scope>
</reference>
<reference key="2">
    <citation type="journal article" date="1997" name="Nature">
        <title>The complete genome sequence of the Gram-positive bacterium Bacillus subtilis.</title>
        <authorList>
            <person name="Kunst F."/>
            <person name="Ogasawara N."/>
            <person name="Moszer I."/>
            <person name="Albertini A.M."/>
            <person name="Alloni G."/>
            <person name="Azevedo V."/>
            <person name="Bertero M.G."/>
            <person name="Bessieres P."/>
            <person name="Bolotin A."/>
            <person name="Borchert S."/>
            <person name="Borriss R."/>
            <person name="Boursier L."/>
            <person name="Brans A."/>
            <person name="Braun M."/>
            <person name="Brignell S.C."/>
            <person name="Bron S."/>
            <person name="Brouillet S."/>
            <person name="Bruschi C.V."/>
            <person name="Caldwell B."/>
            <person name="Capuano V."/>
            <person name="Carter N.M."/>
            <person name="Choi S.-K."/>
            <person name="Codani J.-J."/>
            <person name="Connerton I.F."/>
            <person name="Cummings N.J."/>
            <person name="Daniel R.A."/>
            <person name="Denizot F."/>
            <person name="Devine K.M."/>
            <person name="Duesterhoeft A."/>
            <person name="Ehrlich S.D."/>
            <person name="Emmerson P.T."/>
            <person name="Entian K.-D."/>
            <person name="Errington J."/>
            <person name="Fabret C."/>
            <person name="Ferrari E."/>
            <person name="Foulger D."/>
            <person name="Fritz C."/>
            <person name="Fujita M."/>
            <person name="Fujita Y."/>
            <person name="Fuma S."/>
            <person name="Galizzi A."/>
            <person name="Galleron N."/>
            <person name="Ghim S.-Y."/>
            <person name="Glaser P."/>
            <person name="Goffeau A."/>
            <person name="Golightly E.J."/>
            <person name="Grandi G."/>
            <person name="Guiseppi G."/>
            <person name="Guy B.J."/>
            <person name="Haga K."/>
            <person name="Haiech J."/>
            <person name="Harwood C.R."/>
            <person name="Henaut A."/>
            <person name="Hilbert H."/>
            <person name="Holsappel S."/>
            <person name="Hosono S."/>
            <person name="Hullo M.-F."/>
            <person name="Itaya M."/>
            <person name="Jones L.-M."/>
            <person name="Joris B."/>
            <person name="Karamata D."/>
            <person name="Kasahara Y."/>
            <person name="Klaerr-Blanchard M."/>
            <person name="Klein C."/>
            <person name="Kobayashi Y."/>
            <person name="Koetter P."/>
            <person name="Koningstein G."/>
            <person name="Krogh S."/>
            <person name="Kumano M."/>
            <person name="Kurita K."/>
            <person name="Lapidus A."/>
            <person name="Lardinois S."/>
            <person name="Lauber J."/>
            <person name="Lazarevic V."/>
            <person name="Lee S.-M."/>
            <person name="Levine A."/>
            <person name="Liu H."/>
            <person name="Masuda S."/>
            <person name="Mauel C."/>
            <person name="Medigue C."/>
            <person name="Medina N."/>
            <person name="Mellado R.P."/>
            <person name="Mizuno M."/>
            <person name="Moestl D."/>
            <person name="Nakai S."/>
            <person name="Noback M."/>
            <person name="Noone D."/>
            <person name="O'Reilly M."/>
            <person name="Ogawa K."/>
            <person name="Ogiwara A."/>
            <person name="Oudega B."/>
            <person name="Park S.-H."/>
            <person name="Parro V."/>
            <person name="Pohl T.M."/>
            <person name="Portetelle D."/>
            <person name="Porwollik S."/>
            <person name="Prescott A.M."/>
            <person name="Presecan E."/>
            <person name="Pujic P."/>
            <person name="Purnelle B."/>
            <person name="Rapoport G."/>
            <person name="Rey M."/>
            <person name="Reynolds S."/>
            <person name="Rieger M."/>
            <person name="Rivolta C."/>
            <person name="Rocha E."/>
            <person name="Roche B."/>
            <person name="Rose M."/>
            <person name="Sadaie Y."/>
            <person name="Sato T."/>
            <person name="Scanlan E."/>
            <person name="Schleich S."/>
            <person name="Schroeter R."/>
            <person name="Scoffone F."/>
            <person name="Sekiguchi J."/>
            <person name="Sekowska A."/>
            <person name="Seror S.J."/>
            <person name="Serror P."/>
            <person name="Shin B.-S."/>
            <person name="Soldo B."/>
            <person name="Sorokin A."/>
            <person name="Tacconi E."/>
            <person name="Takagi T."/>
            <person name="Takahashi H."/>
            <person name="Takemaru K."/>
            <person name="Takeuchi M."/>
            <person name="Tamakoshi A."/>
            <person name="Tanaka T."/>
            <person name="Terpstra P."/>
            <person name="Tognoni A."/>
            <person name="Tosato V."/>
            <person name="Uchiyama S."/>
            <person name="Vandenbol M."/>
            <person name="Vannier F."/>
            <person name="Vassarotti A."/>
            <person name="Viari A."/>
            <person name="Wambutt R."/>
            <person name="Wedler E."/>
            <person name="Wedler H."/>
            <person name="Weitzenegger T."/>
            <person name="Winters P."/>
            <person name="Wipat A."/>
            <person name="Yamamoto H."/>
            <person name="Yamane K."/>
            <person name="Yasumoto K."/>
            <person name="Yata K."/>
            <person name="Yoshida K."/>
            <person name="Yoshikawa H.-F."/>
            <person name="Zumstein E."/>
            <person name="Yoshikawa H."/>
            <person name="Danchin A."/>
        </authorList>
    </citation>
    <scope>NUCLEOTIDE SEQUENCE [LARGE SCALE GENOMIC DNA]</scope>
    <source>
        <strain>168</strain>
    </source>
</reference>
<organism>
    <name type="scientific">Bacillus subtilis (strain 168)</name>
    <dbReference type="NCBI Taxonomy" id="224308"/>
    <lineage>
        <taxon>Bacteria</taxon>
        <taxon>Bacillati</taxon>
        <taxon>Bacillota</taxon>
        <taxon>Bacilli</taxon>
        <taxon>Bacillales</taxon>
        <taxon>Bacillaceae</taxon>
        <taxon>Bacillus</taxon>
    </lineage>
</organism>
<sequence length="110" mass="12963">MKKMFRSLIRHCLKPELDKLRECEERLSVIEKQKQSSKQESEETYIHIETLNVEKVDYHLEFGELTIDELSGRLNIGATYYIPPEEKDKKCQRKPEAPSTPAVTIRSKRQ</sequence>
<accession>O34976</accession>